<reference key="1">
    <citation type="journal article" date="2005" name="Science">
        <title>The transcriptional landscape of the mammalian genome.</title>
        <authorList>
            <person name="Carninci P."/>
            <person name="Kasukawa T."/>
            <person name="Katayama S."/>
            <person name="Gough J."/>
            <person name="Frith M.C."/>
            <person name="Maeda N."/>
            <person name="Oyama R."/>
            <person name="Ravasi T."/>
            <person name="Lenhard B."/>
            <person name="Wells C."/>
            <person name="Kodzius R."/>
            <person name="Shimokawa K."/>
            <person name="Bajic V.B."/>
            <person name="Brenner S.E."/>
            <person name="Batalov S."/>
            <person name="Forrest A.R."/>
            <person name="Zavolan M."/>
            <person name="Davis M.J."/>
            <person name="Wilming L.G."/>
            <person name="Aidinis V."/>
            <person name="Allen J.E."/>
            <person name="Ambesi-Impiombato A."/>
            <person name="Apweiler R."/>
            <person name="Aturaliya R.N."/>
            <person name="Bailey T.L."/>
            <person name="Bansal M."/>
            <person name="Baxter L."/>
            <person name="Beisel K.W."/>
            <person name="Bersano T."/>
            <person name="Bono H."/>
            <person name="Chalk A.M."/>
            <person name="Chiu K.P."/>
            <person name="Choudhary V."/>
            <person name="Christoffels A."/>
            <person name="Clutterbuck D.R."/>
            <person name="Crowe M.L."/>
            <person name="Dalla E."/>
            <person name="Dalrymple B.P."/>
            <person name="de Bono B."/>
            <person name="Della Gatta G."/>
            <person name="di Bernardo D."/>
            <person name="Down T."/>
            <person name="Engstrom P."/>
            <person name="Fagiolini M."/>
            <person name="Faulkner G."/>
            <person name="Fletcher C.F."/>
            <person name="Fukushima T."/>
            <person name="Furuno M."/>
            <person name="Futaki S."/>
            <person name="Gariboldi M."/>
            <person name="Georgii-Hemming P."/>
            <person name="Gingeras T.R."/>
            <person name="Gojobori T."/>
            <person name="Green R.E."/>
            <person name="Gustincich S."/>
            <person name="Harbers M."/>
            <person name="Hayashi Y."/>
            <person name="Hensch T.K."/>
            <person name="Hirokawa N."/>
            <person name="Hill D."/>
            <person name="Huminiecki L."/>
            <person name="Iacono M."/>
            <person name="Ikeo K."/>
            <person name="Iwama A."/>
            <person name="Ishikawa T."/>
            <person name="Jakt M."/>
            <person name="Kanapin A."/>
            <person name="Katoh M."/>
            <person name="Kawasawa Y."/>
            <person name="Kelso J."/>
            <person name="Kitamura H."/>
            <person name="Kitano H."/>
            <person name="Kollias G."/>
            <person name="Krishnan S.P."/>
            <person name="Kruger A."/>
            <person name="Kummerfeld S.K."/>
            <person name="Kurochkin I.V."/>
            <person name="Lareau L.F."/>
            <person name="Lazarevic D."/>
            <person name="Lipovich L."/>
            <person name="Liu J."/>
            <person name="Liuni S."/>
            <person name="McWilliam S."/>
            <person name="Madan Babu M."/>
            <person name="Madera M."/>
            <person name="Marchionni L."/>
            <person name="Matsuda H."/>
            <person name="Matsuzawa S."/>
            <person name="Miki H."/>
            <person name="Mignone F."/>
            <person name="Miyake S."/>
            <person name="Morris K."/>
            <person name="Mottagui-Tabar S."/>
            <person name="Mulder N."/>
            <person name="Nakano N."/>
            <person name="Nakauchi H."/>
            <person name="Ng P."/>
            <person name="Nilsson R."/>
            <person name="Nishiguchi S."/>
            <person name="Nishikawa S."/>
            <person name="Nori F."/>
            <person name="Ohara O."/>
            <person name="Okazaki Y."/>
            <person name="Orlando V."/>
            <person name="Pang K.C."/>
            <person name="Pavan W.J."/>
            <person name="Pavesi G."/>
            <person name="Pesole G."/>
            <person name="Petrovsky N."/>
            <person name="Piazza S."/>
            <person name="Reed J."/>
            <person name="Reid J.F."/>
            <person name="Ring B.Z."/>
            <person name="Ringwald M."/>
            <person name="Rost B."/>
            <person name="Ruan Y."/>
            <person name="Salzberg S.L."/>
            <person name="Sandelin A."/>
            <person name="Schneider C."/>
            <person name="Schoenbach C."/>
            <person name="Sekiguchi K."/>
            <person name="Semple C.A."/>
            <person name="Seno S."/>
            <person name="Sessa L."/>
            <person name="Sheng Y."/>
            <person name="Shibata Y."/>
            <person name="Shimada H."/>
            <person name="Shimada K."/>
            <person name="Silva D."/>
            <person name="Sinclair B."/>
            <person name="Sperling S."/>
            <person name="Stupka E."/>
            <person name="Sugiura K."/>
            <person name="Sultana R."/>
            <person name="Takenaka Y."/>
            <person name="Taki K."/>
            <person name="Tammoja K."/>
            <person name="Tan S.L."/>
            <person name="Tang S."/>
            <person name="Taylor M.S."/>
            <person name="Tegner J."/>
            <person name="Teichmann S.A."/>
            <person name="Ueda H.R."/>
            <person name="van Nimwegen E."/>
            <person name="Verardo R."/>
            <person name="Wei C.L."/>
            <person name="Yagi K."/>
            <person name="Yamanishi H."/>
            <person name="Zabarovsky E."/>
            <person name="Zhu S."/>
            <person name="Zimmer A."/>
            <person name="Hide W."/>
            <person name="Bult C."/>
            <person name="Grimmond S.M."/>
            <person name="Teasdale R.D."/>
            <person name="Liu E.T."/>
            <person name="Brusic V."/>
            <person name="Quackenbush J."/>
            <person name="Wahlestedt C."/>
            <person name="Mattick J.S."/>
            <person name="Hume D.A."/>
            <person name="Kai C."/>
            <person name="Sasaki D."/>
            <person name="Tomaru Y."/>
            <person name="Fukuda S."/>
            <person name="Kanamori-Katayama M."/>
            <person name="Suzuki M."/>
            <person name="Aoki J."/>
            <person name="Arakawa T."/>
            <person name="Iida J."/>
            <person name="Imamura K."/>
            <person name="Itoh M."/>
            <person name="Kato T."/>
            <person name="Kawaji H."/>
            <person name="Kawagashira N."/>
            <person name="Kawashima T."/>
            <person name="Kojima M."/>
            <person name="Kondo S."/>
            <person name="Konno H."/>
            <person name="Nakano K."/>
            <person name="Ninomiya N."/>
            <person name="Nishio T."/>
            <person name="Okada M."/>
            <person name="Plessy C."/>
            <person name="Shibata K."/>
            <person name="Shiraki T."/>
            <person name="Suzuki S."/>
            <person name="Tagami M."/>
            <person name="Waki K."/>
            <person name="Watahiki A."/>
            <person name="Okamura-Oho Y."/>
            <person name="Suzuki H."/>
            <person name="Kawai J."/>
            <person name="Hayashizaki Y."/>
        </authorList>
    </citation>
    <scope>NUCLEOTIDE SEQUENCE [LARGE SCALE MRNA]</scope>
    <source>
        <strain>C57BL/6J</strain>
        <tissue>Bone marrow</tissue>
        <tissue>Cerebellum</tissue>
        <tissue>Eye</tissue>
        <tissue>Thymus</tissue>
    </source>
</reference>
<reference key="2">
    <citation type="journal article" date="2004" name="Genome Res.">
        <title>The status, quality, and expansion of the NIH full-length cDNA project: the Mammalian Gene Collection (MGC).</title>
        <authorList>
            <consortium name="The MGC Project Team"/>
        </authorList>
    </citation>
    <scope>NUCLEOTIDE SEQUENCE [LARGE SCALE MRNA]</scope>
    <source>
        <strain>FVB/N-3</strain>
        <tissue>Mammary tumor</tissue>
    </source>
</reference>
<keyword id="KW-0007">Acetylation</keyword>
<keyword id="KW-0238">DNA-binding</keyword>
<keyword id="KW-1017">Isopeptide bond</keyword>
<keyword id="KW-0479">Metal-binding</keyword>
<keyword id="KW-0539">Nucleus</keyword>
<keyword id="KW-0597">Phosphoprotein</keyword>
<keyword id="KW-1185">Reference proteome</keyword>
<keyword id="KW-0677">Repeat</keyword>
<keyword id="KW-0804">Transcription</keyword>
<keyword id="KW-0805">Transcription regulation</keyword>
<keyword id="KW-0832">Ubl conjugation</keyword>
<keyword id="KW-0862">Zinc</keyword>
<keyword id="KW-0863">Zinc-finger</keyword>
<gene>
    <name type="primary">Znf668</name>
    <name type="synonym">Zfp668</name>
</gene>
<feature type="chain" id="PRO_0000251480" description="Zinc finger protein 668">
    <location>
        <begin position="1"/>
        <end position="619"/>
    </location>
</feature>
<feature type="zinc finger region" description="C2H2-type 1" evidence="2">
    <location>
        <begin position="22"/>
        <end position="44"/>
    </location>
</feature>
<feature type="zinc finger region" description="C2H2-type 2" evidence="2">
    <location>
        <begin position="84"/>
        <end position="106"/>
    </location>
</feature>
<feature type="zinc finger region" description="C2H2-type 3" evidence="2">
    <location>
        <begin position="112"/>
        <end position="134"/>
    </location>
</feature>
<feature type="zinc finger region" description="C2H2-type 4" evidence="2">
    <location>
        <begin position="140"/>
        <end position="162"/>
    </location>
</feature>
<feature type="zinc finger region" description="C2H2-type 5" evidence="2">
    <location>
        <begin position="168"/>
        <end position="190"/>
    </location>
</feature>
<feature type="zinc finger region" description="C2H2-type 6" evidence="2">
    <location>
        <begin position="196"/>
        <end position="218"/>
    </location>
</feature>
<feature type="zinc finger region" description="C2H2-type 7" evidence="2">
    <location>
        <begin position="224"/>
        <end position="246"/>
    </location>
</feature>
<feature type="zinc finger region" description="C2H2-type 8" evidence="2">
    <location>
        <begin position="252"/>
        <end position="274"/>
    </location>
</feature>
<feature type="zinc finger region" description="C2H2-type 9" evidence="2">
    <location>
        <begin position="280"/>
        <end position="302"/>
    </location>
</feature>
<feature type="zinc finger region" description="C2H2-type 10" evidence="2">
    <location>
        <begin position="308"/>
        <end position="330"/>
    </location>
</feature>
<feature type="zinc finger region" description="C2H2-type 11" evidence="2">
    <location>
        <begin position="336"/>
        <end position="358"/>
    </location>
</feature>
<feature type="zinc finger region" description="C2H2-type 12" evidence="2">
    <location>
        <begin position="364"/>
        <end position="386"/>
    </location>
</feature>
<feature type="zinc finger region" description="C2H2-type 13" evidence="2">
    <location>
        <begin position="392"/>
        <end position="414"/>
    </location>
</feature>
<feature type="zinc finger region" description="C2H2-type 14" evidence="2">
    <location>
        <begin position="516"/>
        <end position="538"/>
    </location>
</feature>
<feature type="zinc finger region" description="C2H2-type 15" evidence="2">
    <location>
        <begin position="544"/>
        <end position="566"/>
    </location>
</feature>
<feature type="zinc finger region" description="C2H2-type 16" evidence="2">
    <location>
        <begin position="572"/>
        <end position="594"/>
    </location>
</feature>
<feature type="region of interest" description="Disordered" evidence="3">
    <location>
        <begin position="36"/>
        <end position="74"/>
    </location>
</feature>
<feature type="region of interest" description="Disordered" evidence="3">
    <location>
        <begin position="491"/>
        <end position="513"/>
    </location>
</feature>
<feature type="compositionally biased region" description="Basic and acidic residues" evidence="3">
    <location>
        <begin position="51"/>
        <end position="71"/>
    </location>
</feature>
<feature type="modified residue" description="N-acetylmethionine" evidence="1">
    <location>
        <position position="1"/>
    </location>
</feature>
<feature type="modified residue" description="Phosphoserine" evidence="1">
    <location>
        <position position="10"/>
    </location>
</feature>
<feature type="modified residue" description="Phosphoserine" evidence="1">
    <location>
        <position position="387"/>
    </location>
</feature>
<feature type="cross-link" description="Glycyl lysine isopeptide (Lys-Gly) (interchain with G-Cter in SUMO2)" evidence="1">
    <location>
        <position position="59"/>
    </location>
</feature>
<feature type="cross-link" description="Glycyl lysine isopeptide (Lys-Gly) (interchain with G-Cter in SUMO2)" evidence="1">
    <location>
        <position position="65"/>
    </location>
</feature>
<feature type="cross-link" description="Glycyl lysine isopeptide (Lys-Gly) (interchain with G-Cter in SUMO2)" evidence="1">
    <location>
        <position position="80"/>
    </location>
</feature>
<feature type="cross-link" description="Glycyl lysine isopeptide (Lys-Gly) (interchain with G-Cter in SUMO2)" evidence="1">
    <location>
        <position position="154"/>
    </location>
</feature>
<feature type="cross-link" description="Glycyl lysine isopeptide (Lys-Gly) (interchain with G-Cter in SUMO2)" evidence="1">
    <location>
        <position position="512"/>
    </location>
</feature>
<feature type="sequence conflict" description="In Ref. 1; BAE41226." evidence="4" ref="1">
    <original>C</original>
    <variation>Y</variation>
    <location>
        <position position="86"/>
    </location>
</feature>
<feature type="sequence conflict" description="In Ref. 1; BAE41226." evidence="4" ref="1">
    <original>K</original>
    <variation>R</variation>
    <location>
        <position position="94"/>
    </location>
</feature>
<feature type="sequence conflict" description="In Ref. 1; BAC33091." evidence="4" ref="1">
    <original>T</original>
    <variation>I</variation>
    <location>
        <position position="95"/>
    </location>
</feature>
<feature type="sequence conflict" description="In Ref. 1; BAE31234." evidence="4" ref="1">
    <original>F</original>
    <variation>L</variation>
    <location>
        <position position="233"/>
    </location>
</feature>
<feature type="sequence conflict" description="In Ref. 1; BAC33091." evidence="4" ref="1">
    <original>R</original>
    <variation>G</variation>
    <location>
        <position position="296"/>
    </location>
</feature>
<feature type="sequence conflict" description="In Ref. 1; BAC33091." evidence="4" ref="1">
    <original>L</original>
    <variation>I</variation>
    <location>
        <position position="407"/>
    </location>
</feature>
<accession>Q8K2R5</accession>
<accession>Q3TEM2</accession>
<accession>Q3U7Y5</accession>
<accession>Q8C8B7</accession>
<name>ZN668_MOUSE</name>
<evidence type="ECO:0000250" key="1">
    <source>
        <dbReference type="UniProtKB" id="Q96K58"/>
    </source>
</evidence>
<evidence type="ECO:0000255" key="2">
    <source>
        <dbReference type="PROSITE-ProRule" id="PRU00042"/>
    </source>
</evidence>
<evidence type="ECO:0000256" key="3">
    <source>
        <dbReference type="SAM" id="MobiDB-lite"/>
    </source>
</evidence>
<evidence type="ECO:0000305" key="4"/>
<dbReference type="EMBL" id="AK047593">
    <property type="protein sequence ID" value="BAC33091.1"/>
    <property type="molecule type" value="mRNA"/>
</dbReference>
<dbReference type="EMBL" id="AK053438">
    <property type="protein sequence ID" value="BAC35386.1"/>
    <property type="molecule type" value="mRNA"/>
</dbReference>
<dbReference type="EMBL" id="AK152456">
    <property type="protein sequence ID" value="BAE31234.1"/>
    <property type="molecule type" value="mRNA"/>
</dbReference>
<dbReference type="EMBL" id="AK169556">
    <property type="protein sequence ID" value="BAE41226.1"/>
    <property type="molecule type" value="mRNA"/>
</dbReference>
<dbReference type="EMBL" id="BC030314">
    <property type="protein sequence ID" value="AAH30314.1"/>
    <property type="molecule type" value="mRNA"/>
</dbReference>
<dbReference type="CCDS" id="CCDS21881.1"/>
<dbReference type="RefSeq" id="NP_666371.1">
    <property type="nucleotide sequence ID" value="NM_146259.3"/>
</dbReference>
<dbReference type="RefSeq" id="XP_006507911.1">
    <property type="nucleotide sequence ID" value="XM_006507848.2"/>
</dbReference>
<dbReference type="RefSeq" id="XP_006507912.1">
    <property type="nucleotide sequence ID" value="XM_006507849.1"/>
</dbReference>
<dbReference type="RefSeq" id="XP_006507913.1">
    <property type="nucleotide sequence ID" value="XM_006507850.2"/>
</dbReference>
<dbReference type="RefSeq" id="XP_006507914.1">
    <property type="nucleotide sequence ID" value="XM_006507851.3"/>
</dbReference>
<dbReference type="RefSeq" id="XP_017177743.1">
    <property type="nucleotide sequence ID" value="XM_017322254.1"/>
</dbReference>
<dbReference type="RefSeq" id="XP_017177744.1">
    <property type="nucleotide sequence ID" value="XM_017322255.1"/>
</dbReference>
<dbReference type="RefSeq" id="XP_017177745.1">
    <property type="nucleotide sequence ID" value="XM_017322256.1"/>
</dbReference>
<dbReference type="SMR" id="Q8K2R5"/>
<dbReference type="FunCoup" id="Q8K2R5">
    <property type="interactions" value="635"/>
</dbReference>
<dbReference type="IntAct" id="Q8K2R5">
    <property type="interactions" value="1"/>
</dbReference>
<dbReference type="STRING" id="10090.ENSMUSP00000056105"/>
<dbReference type="iPTMnet" id="Q8K2R5"/>
<dbReference type="PhosphoSitePlus" id="Q8K2R5"/>
<dbReference type="SwissPalm" id="Q8K2R5"/>
<dbReference type="jPOST" id="Q8K2R5"/>
<dbReference type="PaxDb" id="10090-ENSMUSP00000056105"/>
<dbReference type="PeptideAtlas" id="Q8K2R5"/>
<dbReference type="ProteomicsDB" id="275030"/>
<dbReference type="Pumba" id="Q8K2R5"/>
<dbReference type="Antibodypedia" id="13908">
    <property type="antibodies" value="111 antibodies from 27 providers"/>
</dbReference>
<dbReference type="DNASU" id="244219"/>
<dbReference type="Ensembl" id="ENSMUST00000054415.12">
    <property type="protein sequence ID" value="ENSMUSP00000056105.6"/>
    <property type="gene ID" value="ENSMUSG00000049728.15"/>
</dbReference>
<dbReference type="Ensembl" id="ENSMUST00000106261.8">
    <property type="protein sequence ID" value="ENSMUSP00000101868.2"/>
    <property type="gene ID" value="ENSMUSG00000049728.15"/>
</dbReference>
<dbReference type="Ensembl" id="ENSMUST00000106262.2">
    <property type="protein sequence ID" value="ENSMUSP00000101869.2"/>
    <property type="gene ID" value="ENSMUSG00000049728.15"/>
</dbReference>
<dbReference type="Ensembl" id="ENSMUST00000106263.8">
    <property type="protein sequence ID" value="ENSMUSP00000101870.2"/>
    <property type="gene ID" value="ENSMUSG00000049728.15"/>
</dbReference>
<dbReference type="GeneID" id="244219"/>
<dbReference type="KEGG" id="mmu:244219"/>
<dbReference type="UCSC" id="uc009jxa.1">
    <property type="organism name" value="mouse"/>
</dbReference>
<dbReference type="AGR" id="MGI:2442943"/>
<dbReference type="CTD" id="244219"/>
<dbReference type="MGI" id="MGI:2442943">
    <property type="gene designation" value="Zfp668"/>
</dbReference>
<dbReference type="VEuPathDB" id="HostDB:ENSMUSG00000049728"/>
<dbReference type="eggNOG" id="KOG1721">
    <property type="taxonomic scope" value="Eukaryota"/>
</dbReference>
<dbReference type="GeneTree" id="ENSGT00920000149141"/>
<dbReference type="HOGENOM" id="CLU_002678_44_5_1"/>
<dbReference type="InParanoid" id="Q8K2R5"/>
<dbReference type="OMA" id="WDEVQAH"/>
<dbReference type="OrthoDB" id="1095242at2759"/>
<dbReference type="PhylomeDB" id="Q8K2R5"/>
<dbReference type="TreeFam" id="TF331849"/>
<dbReference type="BioGRID-ORCS" id="244219">
    <property type="hits" value="3 hits in 79 CRISPR screens"/>
</dbReference>
<dbReference type="PRO" id="PR:Q8K2R5"/>
<dbReference type="Proteomes" id="UP000000589">
    <property type="component" value="Chromosome 7"/>
</dbReference>
<dbReference type="RNAct" id="Q8K2R5">
    <property type="molecule type" value="protein"/>
</dbReference>
<dbReference type="Bgee" id="ENSMUSG00000049728">
    <property type="expression patterns" value="Expressed in embryonic brain and 217 other cell types or tissues"/>
</dbReference>
<dbReference type="ExpressionAtlas" id="Q8K2R5">
    <property type="expression patterns" value="baseline and differential"/>
</dbReference>
<dbReference type="GO" id="GO:0005634">
    <property type="term" value="C:nucleus"/>
    <property type="evidence" value="ECO:0007669"/>
    <property type="project" value="UniProtKB-SubCell"/>
</dbReference>
<dbReference type="GO" id="GO:0001227">
    <property type="term" value="F:DNA-binding transcription repressor activity, RNA polymerase II-specific"/>
    <property type="evidence" value="ECO:0000314"/>
    <property type="project" value="NTNU_SB"/>
</dbReference>
<dbReference type="GO" id="GO:0000978">
    <property type="term" value="F:RNA polymerase II cis-regulatory region sequence-specific DNA binding"/>
    <property type="evidence" value="ECO:0000314"/>
    <property type="project" value="NTNU_SB"/>
</dbReference>
<dbReference type="GO" id="GO:0008270">
    <property type="term" value="F:zinc ion binding"/>
    <property type="evidence" value="ECO:0007669"/>
    <property type="project" value="UniProtKB-KW"/>
</dbReference>
<dbReference type="GO" id="GO:0006281">
    <property type="term" value="P:DNA repair"/>
    <property type="evidence" value="ECO:0000250"/>
    <property type="project" value="UniProtKB"/>
</dbReference>
<dbReference type="GO" id="GO:0000122">
    <property type="term" value="P:negative regulation of transcription by RNA polymerase II"/>
    <property type="evidence" value="ECO:0000314"/>
    <property type="project" value="NTNU_SB"/>
</dbReference>
<dbReference type="FunFam" id="3.30.160.60:FF:000012">
    <property type="entry name" value="RB-associated KRAB zinc finger protein-like"/>
    <property type="match status" value="1"/>
</dbReference>
<dbReference type="FunFam" id="3.30.160.60:FF:000100">
    <property type="entry name" value="Zinc finger 45-like"/>
    <property type="match status" value="1"/>
</dbReference>
<dbReference type="FunFam" id="3.30.160.60:FF:000643">
    <property type="entry name" value="Zinc finger protein 668"/>
    <property type="match status" value="1"/>
</dbReference>
<dbReference type="FunFam" id="3.30.160.60:FF:000916">
    <property type="entry name" value="Zinc finger protein 668"/>
    <property type="match status" value="1"/>
</dbReference>
<dbReference type="FunFam" id="3.30.160.60:FF:000973">
    <property type="entry name" value="Zinc finger protein 668"/>
    <property type="match status" value="1"/>
</dbReference>
<dbReference type="FunFam" id="3.30.160.60:FF:001052">
    <property type="entry name" value="Zinc finger protein 668"/>
    <property type="match status" value="1"/>
</dbReference>
<dbReference type="FunFam" id="3.30.160.60:FF:001206">
    <property type="entry name" value="Zinc finger protein 668"/>
    <property type="match status" value="1"/>
</dbReference>
<dbReference type="FunFam" id="3.30.160.60:FF:000495">
    <property type="entry name" value="zinc finger protein 668"/>
    <property type="match status" value="2"/>
</dbReference>
<dbReference type="FunFam" id="3.30.160.60:FF:000528">
    <property type="entry name" value="zinc finger protein 668"/>
    <property type="match status" value="2"/>
</dbReference>
<dbReference type="FunFam" id="3.30.160.60:FF:000995">
    <property type="entry name" value="zinc finger protein 668"/>
    <property type="match status" value="1"/>
</dbReference>
<dbReference type="FunFam" id="3.30.160.60:FF:001203">
    <property type="entry name" value="zinc finger protein 668"/>
    <property type="match status" value="1"/>
</dbReference>
<dbReference type="FunFam" id="3.30.160.60:FF:000093">
    <property type="entry name" value="zinc finger protein 668 isoform X1"/>
    <property type="match status" value="1"/>
</dbReference>
<dbReference type="Gene3D" id="3.30.160.60">
    <property type="entry name" value="Classic Zinc Finger"/>
    <property type="match status" value="15"/>
</dbReference>
<dbReference type="InterPro" id="IPR036236">
    <property type="entry name" value="Znf_C2H2_sf"/>
</dbReference>
<dbReference type="InterPro" id="IPR013087">
    <property type="entry name" value="Znf_C2H2_type"/>
</dbReference>
<dbReference type="PANTHER" id="PTHR23235">
    <property type="entry name" value="KRUEPPEL-LIKE TRANSCRIPTION FACTOR"/>
    <property type="match status" value="1"/>
</dbReference>
<dbReference type="PANTHER" id="PTHR23235:SF152">
    <property type="entry name" value="SI:DKEY-210J14.3"/>
    <property type="match status" value="1"/>
</dbReference>
<dbReference type="Pfam" id="PF00096">
    <property type="entry name" value="zf-C2H2"/>
    <property type="match status" value="14"/>
</dbReference>
<dbReference type="Pfam" id="PF13912">
    <property type="entry name" value="zf-C2H2_6"/>
    <property type="match status" value="1"/>
</dbReference>
<dbReference type="SMART" id="SM00355">
    <property type="entry name" value="ZnF_C2H2"/>
    <property type="match status" value="16"/>
</dbReference>
<dbReference type="SUPFAM" id="SSF57667">
    <property type="entry name" value="beta-beta-alpha zinc fingers"/>
    <property type="match status" value="8"/>
</dbReference>
<dbReference type="PROSITE" id="PS00028">
    <property type="entry name" value="ZINC_FINGER_C2H2_1"/>
    <property type="match status" value="16"/>
</dbReference>
<dbReference type="PROSITE" id="PS50157">
    <property type="entry name" value="ZINC_FINGER_C2H2_2"/>
    <property type="match status" value="16"/>
</dbReference>
<organism>
    <name type="scientific">Mus musculus</name>
    <name type="common">Mouse</name>
    <dbReference type="NCBI Taxonomy" id="10090"/>
    <lineage>
        <taxon>Eukaryota</taxon>
        <taxon>Metazoa</taxon>
        <taxon>Chordata</taxon>
        <taxon>Craniata</taxon>
        <taxon>Vertebrata</taxon>
        <taxon>Euteleostomi</taxon>
        <taxon>Mammalia</taxon>
        <taxon>Eutheria</taxon>
        <taxon>Euarchontoglires</taxon>
        <taxon>Glires</taxon>
        <taxon>Rodentia</taxon>
        <taxon>Myomorpha</taxon>
        <taxon>Muroidea</taxon>
        <taxon>Muridae</taxon>
        <taxon>Murinae</taxon>
        <taxon>Mus</taxon>
        <taxon>Mus</taxon>
    </lineage>
</organism>
<protein>
    <recommendedName>
        <fullName>Zinc finger protein 668</fullName>
    </recommendedName>
</protein>
<proteinExistence type="evidence at transcript level"/>
<sequence length="619" mass="68347">MEVEATEARSPGPCYKRSGRRYKCLFCTKTFPNAPRAARHAATHTPTDCTEEVREAQPKVDTEPKAEEASGDKVSASVAKPRPYACPLCPKAYKTAPELRSHGRSHTGEKPFPCPECGRRFMQPVCLRVHLASHAGELPFRCTHCPKAYGTLSKLKIHQRGHTGERPYACPDCGKSFADPSVFRKHRRTHAGLRPYSCERCGKAYAELKDLRNHERSHTGERPFLCSECGKSFSRSSSLTCHQRIHAAQKPYRCPACGKGFTQLSSYQSHERTHSGEKPFLCPRCGRMFSDPSSFRRHQRAHEGVKPYRCEKCGKDFRQPADLAMHRRVHTGDRPFKCLQCDKTFVASWDLKRHALVHSGQRPFRCEECGRAFAERASLTKHSRMHSGERPFHCNACGKSFVVLSSLRKHERTHRSNETTGAAPQQELVLGLALPVGVVGEGSAAPVAGAGVGDAPAGLLGLPPESGGVVATQWQVVGMTVEHVECQDAGVGEAPSTLGDAGEVGGEETDEKPPQFVCRECKETFSTLTLLRRHERSHPELRPFPCTQCGKSFSDRAGLRKHSRTHSSVRPYSCSQCPKAFLSASDLRKHERTHPVPIGTPIPLEPLVALLGMPEEGSA</sequence>
<comment type="function">
    <text evidence="1">May be involved in transcriptional regulation. May play a role in DNA repair process.</text>
</comment>
<comment type="subcellular location">
    <subcellularLocation>
        <location evidence="1">Nucleus</location>
    </subcellularLocation>
</comment>
<comment type="similarity">
    <text evidence="4">Belongs to the krueppel C2H2-type zinc-finger protein family.</text>
</comment>